<dbReference type="EC" id="3.11.1.1" evidence="1"/>
<dbReference type="EMBL" id="CP001186">
    <property type="protein sequence ID" value="ACK93565.1"/>
    <property type="molecule type" value="Genomic_DNA"/>
</dbReference>
<dbReference type="RefSeq" id="WP_000687386.1">
    <property type="nucleotide sequence ID" value="NC_011772.1"/>
</dbReference>
<dbReference type="SMR" id="B7IN18"/>
<dbReference type="KEGG" id="bcg:BCG9842_B3967"/>
<dbReference type="HOGENOM" id="CLU_045011_12_0_9"/>
<dbReference type="Proteomes" id="UP000006744">
    <property type="component" value="Chromosome"/>
</dbReference>
<dbReference type="GO" id="GO:0005829">
    <property type="term" value="C:cytosol"/>
    <property type="evidence" value="ECO:0007669"/>
    <property type="project" value="TreeGrafter"/>
</dbReference>
<dbReference type="GO" id="GO:0000287">
    <property type="term" value="F:magnesium ion binding"/>
    <property type="evidence" value="ECO:0007669"/>
    <property type="project" value="UniProtKB-UniRule"/>
</dbReference>
<dbReference type="GO" id="GO:0008967">
    <property type="term" value="F:phosphoglycolate phosphatase activity"/>
    <property type="evidence" value="ECO:0007669"/>
    <property type="project" value="TreeGrafter"/>
</dbReference>
<dbReference type="GO" id="GO:0050194">
    <property type="term" value="F:phosphonoacetaldehyde hydrolase activity"/>
    <property type="evidence" value="ECO:0007669"/>
    <property type="project" value="UniProtKB-UniRule"/>
</dbReference>
<dbReference type="GO" id="GO:0006281">
    <property type="term" value="P:DNA repair"/>
    <property type="evidence" value="ECO:0007669"/>
    <property type="project" value="TreeGrafter"/>
</dbReference>
<dbReference type="GO" id="GO:0019700">
    <property type="term" value="P:organic phosphonate catabolic process"/>
    <property type="evidence" value="ECO:0007669"/>
    <property type="project" value="InterPro"/>
</dbReference>
<dbReference type="CDD" id="cd02586">
    <property type="entry name" value="HAD_PHN"/>
    <property type="match status" value="1"/>
</dbReference>
<dbReference type="FunFam" id="1.10.150.240:FF:000022">
    <property type="entry name" value="Phosphonoacetaldehyde hydrolase"/>
    <property type="match status" value="1"/>
</dbReference>
<dbReference type="FunFam" id="3.40.50.1000:FF:000072">
    <property type="entry name" value="Phosphonoacetaldehyde hydrolase"/>
    <property type="match status" value="1"/>
</dbReference>
<dbReference type="Gene3D" id="3.40.50.1000">
    <property type="entry name" value="HAD superfamily/HAD-like"/>
    <property type="match status" value="1"/>
</dbReference>
<dbReference type="Gene3D" id="1.10.150.240">
    <property type="entry name" value="Putative phosphatase, domain 2"/>
    <property type="match status" value="1"/>
</dbReference>
<dbReference type="HAMAP" id="MF_01375">
    <property type="entry name" value="PhnX"/>
    <property type="match status" value="1"/>
</dbReference>
<dbReference type="InterPro" id="IPR050155">
    <property type="entry name" value="HAD-like_hydrolase_sf"/>
</dbReference>
<dbReference type="InterPro" id="IPR036412">
    <property type="entry name" value="HAD-like_sf"/>
</dbReference>
<dbReference type="InterPro" id="IPR006439">
    <property type="entry name" value="HAD-SF_hydro_IA"/>
</dbReference>
<dbReference type="InterPro" id="IPR041492">
    <property type="entry name" value="HAD_2"/>
</dbReference>
<dbReference type="InterPro" id="IPR023214">
    <property type="entry name" value="HAD_sf"/>
</dbReference>
<dbReference type="InterPro" id="IPR023198">
    <property type="entry name" value="PGP-like_dom2"/>
</dbReference>
<dbReference type="InterPro" id="IPR006323">
    <property type="entry name" value="Phosphonoacetald_hydro"/>
</dbReference>
<dbReference type="NCBIfam" id="TIGR01549">
    <property type="entry name" value="HAD-SF-IA-v1"/>
    <property type="match status" value="1"/>
</dbReference>
<dbReference type="NCBIfam" id="TIGR01422">
    <property type="entry name" value="phosphonatase"/>
    <property type="match status" value="1"/>
</dbReference>
<dbReference type="PANTHER" id="PTHR43434">
    <property type="entry name" value="PHOSPHOGLYCOLATE PHOSPHATASE"/>
    <property type="match status" value="1"/>
</dbReference>
<dbReference type="PANTHER" id="PTHR43434:SF19">
    <property type="entry name" value="PHOSPHONOACETALDEHYDE HYDROLASE"/>
    <property type="match status" value="1"/>
</dbReference>
<dbReference type="Pfam" id="PF13419">
    <property type="entry name" value="HAD_2"/>
    <property type="match status" value="1"/>
</dbReference>
<dbReference type="SFLD" id="SFLDG01135">
    <property type="entry name" value="C1.5.6:_HAD__Beta-PGM__Phospha"/>
    <property type="match status" value="1"/>
</dbReference>
<dbReference type="SFLD" id="SFLDF00038">
    <property type="entry name" value="phosphonoacetaldehyde_hydrolas"/>
    <property type="match status" value="1"/>
</dbReference>
<dbReference type="SUPFAM" id="SSF56784">
    <property type="entry name" value="HAD-like"/>
    <property type="match status" value="1"/>
</dbReference>
<keyword id="KW-0378">Hydrolase</keyword>
<keyword id="KW-0460">Magnesium</keyword>
<keyword id="KW-0479">Metal-binding</keyword>
<keyword id="KW-0704">Schiff base</keyword>
<proteinExistence type="inferred from homology"/>
<name>PHNX_BACC2</name>
<comment type="function">
    <text evidence="1">Involved in phosphonate degradation.</text>
</comment>
<comment type="catalytic activity">
    <reaction evidence="1">
        <text>phosphonoacetaldehyde + H2O = acetaldehyde + phosphate + H(+)</text>
        <dbReference type="Rhea" id="RHEA:18905"/>
        <dbReference type="ChEBI" id="CHEBI:15343"/>
        <dbReference type="ChEBI" id="CHEBI:15377"/>
        <dbReference type="ChEBI" id="CHEBI:15378"/>
        <dbReference type="ChEBI" id="CHEBI:43474"/>
        <dbReference type="ChEBI" id="CHEBI:58383"/>
        <dbReference type="EC" id="3.11.1.1"/>
    </reaction>
</comment>
<comment type="cofactor">
    <cofactor evidence="1">
        <name>Mg(2+)</name>
        <dbReference type="ChEBI" id="CHEBI:18420"/>
    </cofactor>
    <text evidence="1">Binds 1 Mg(2+) ion per subunit.</text>
</comment>
<comment type="subunit">
    <text evidence="1">Homodimer.</text>
</comment>
<comment type="similarity">
    <text evidence="1">Belongs to the HAD-like hydrolase superfamily. PhnX family.</text>
</comment>
<organism>
    <name type="scientific">Bacillus cereus (strain G9842)</name>
    <dbReference type="NCBI Taxonomy" id="405531"/>
    <lineage>
        <taxon>Bacteria</taxon>
        <taxon>Bacillati</taxon>
        <taxon>Bacillota</taxon>
        <taxon>Bacilli</taxon>
        <taxon>Bacillales</taxon>
        <taxon>Bacillaceae</taxon>
        <taxon>Bacillus</taxon>
        <taxon>Bacillus cereus group</taxon>
    </lineage>
</organism>
<sequence>MKIEAVIFDWAGTTVDYGCFAPLEVFMKIFHKRGVEITVEEARKPMGLLKIDHVRALTEMPRIADEWKRVFGQLPTEVDIHEMYEEFEEILFSILPSYATPIEGVKEVIASLRERGIKIGSTTGYTREMMDIVAKEAALQGYKPDFLVTPDDVPAGRPYPWMCYKNAMELDVYPMNHMIKVGDTVSDMKEGRNAGMWTVGVILGSSELGLTEEEVESMDSVELREKIEVVRNRFVENGAHFTIETMQELENIIEHIEKQELIIS</sequence>
<accession>B7IN18</accession>
<reference key="1">
    <citation type="submission" date="2008-10" db="EMBL/GenBank/DDBJ databases">
        <title>Genome sequence of Bacillus cereus G9842.</title>
        <authorList>
            <person name="Dodson R.J."/>
            <person name="Durkin A.S."/>
            <person name="Rosovitz M.J."/>
            <person name="Rasko D.A."/>
            <person name="Hoffmaster A."/>
            <person name="Ravel J."/>
            <person name="Sutton G."/>
        </authorList>
    </citation>
    <scope>NUCLEOTIDE SEQUENCE [LARGE SCALE GENOMIC DNA]</scope>
    <source>
        <strain>G9842</strain>
    </source>
</reference>
<gene>
    <name evidence="1" type="primary">phnX</name>
    <name type="ordered locus">BCG9842_B3967</name>
</gene>
<evidence type="ECO:0000255" key="1">
    <source>
        <dbReference type="HAMAP-Rule" id="MF_01375"/>
    </source>
</evidence>
<feature type="chain" id="PRO_1000144827" description="Phosphonoacetaldehyde hydrolase">
    <location>
        <begin position="1"/>
        <end position="264"/>
    </location>
</feature>
<feature type="active site" description="Nucleophile" evidence="1">
    <location>
        <position position="9"/>
    </location>
</feature>
<feature type="active site" description="Schiff-base intermediate with substrate" evidence="1">
    <location>
        <position position="50"/>
    </location>
</feature>
<feature type="binding site" evidence="1">
    <location>
        <position position="9"/>
    </location>
    <ligand>
        <name>Mg(2+)</name>
        <dbReference type="ChEBI" id="CHEBI:18420"/>
    </ligand>
</feature>
<feature type="binding site" evidence="1">
    <location>
        <position position="11"/>
    </location>
    <ligand>
        <name>Mg(2+)</name>
        <dbReference type="ChEBI" id="CHEBI:18420"/>
    </ligand>
</feature>
<feature type="binding site" evidence="1">
    <location>
        <position position="183"/>
    </location>
    <ligand>
        <name>Mg(2+)</name>
        <dbReference type="ChEBI" id="CHEBI:18420"/>
    </ligand>
</feature>
<protein>
    <recommendedName>
        <fullName evidence="1">Phosphonoacetaldehyde hydrolase</fullName>
        <shortName evidence="1">Phosphonatase</shortName>
        <ecNumber evidence="1">3.11.1.1</ecNumber>
    </recommendedName>
    <alternativeName>
        <fullName evidence="1">Phosphonoacetaldehyde phosphonohydrolase</fullName>
    </alternativeName>
</protein>